<evidence type="ECO:0000255" key="1">
    <source>
        <dbReference type="HAMAP-Rule" id="MF_01150"/>
    </source>
</evidence>
<feature type="chain" id="PRO_0000414902" description="Chaperone protein TorD">
    <location>
        <begin position="1"/>
        <end position="221"/>
    </location>
</feature>
<dbReference type="EMBL" id="CP000851">
    <property type="protein sequence ID" value="ABV88659.1"/>
    <property type="molecule type" value="Genomic_DNA"/>
</dbReference>
<dbReference type="RefSeq" id="WP_012156558.1">
    <property type="nucleotide sequence ID" value="NC_009901.1"/>
</dbReference>
<dbReference type="SMR" id="A8H7X2"/>
<dbReference type="STRING" id="398579.Spea_3344"/>
<dbReference type="KEGG" id="spl:Spea_3344"/>
<dbReference type="eggNOG" id="COG3381">
    <property type="taxonomic scope" value="Bacteria"/>
</dbReference>
<dbReference type="HOGENOM" id="CLU_077650_4_0_6"/>
<dbReference type="OrthoDB" id="7849731at2"/>
<dbReference type="Proteomes" id="UP000002608">
    <property type="component" value="Chromosome"/>
</dbReference>
<dbReference type="GO" id="GO:0005737">
    <property type="term" value="C:cytoplasm"/>
    <property type="evidence" value="ECO:0007669"/>
    <property type="project" value="UniProtKB-SubCell"/>
</dbReference>
<dbReference type="GO" id="GO:0051259">
    <property type="term" value="P:protein complex oligomerization"/>
    <property type="evidence" value="ECO:0007669"/>
    <property type="project" value="InterPro"/>
</dbReference>
<dbReference type="GO" id="GO:0006457">
    <property type="term" value="P:protein folding"/>
    <property type="evidence" value="ECO:0007669"/>
    <property type="project" value="UniProtKB-UniRule"/>
</dbReference>
<dbReference type="Gene3D" id="1.20.120.1820">
    <property type="match status" value="1"/>
</dbReference>
<dbReference type="Gene3D" id="1.20.1280.20">
    <property type="entry name" value="HscB, C-terminal domain"/>
    <property type="match status" value="1"/>
</dbReference>
<dbReference type="HAMAP" id="MF_01150">
    <property type="entry name" value="TorD"/>
    <property type="match status" value="1"/>
</dbReference>
<dbReference type="InterPro" id="IPR023069">
    <property type="entry name" value="Chaperone_TorD"/>
</dbReference>
<dbReference type="InterPro" id="IPR020945">
    <property type="entry name" value="DMSO/NO3_reduct_chaperone"/>
</dbReference>
<dbReference type="InterPro" id="IPR036386">
    <property type="entry name" value="HscB_C_sf"/>
</dbReference>
<dbReference type="InterPro" id="IPR036411">
    <property type="entry name" value="TorD-like_sf"/>
</dbReference>
<dbReference type="InterPro" id="IPR050289">
    <property type="entry name" value="TorD/DmsD_chaperones"/>
</dbReference>
<dbReference type="NCBIfam" id="NF003442">
    <property type="entry name" value="PRK04976.1"/>
    <property type="match status" value="1"/>
</dbReference>
<dbReference type="PANTHER" id="PTHR34227:SF11">
    <property type="entry name" value="CHAPERONE PROTEIN TORD"/>
    <property type="match status" value="1"/>
</dbReference>
<dbReference type="PANTHER" id="PTHR34227">
    <property type="entry name" value="CHAPERONE PROTEIN YCDY"/>
    <property type="match status" value="1"/>
</dbReference>
<dbReference type="Pfam" id="PF02613">
    <property type="entry name" value="Nitrate_red_del"/>
    <property type="match status" value="1"/>
</dbReference>
<dbReference type="SUPFAM" id="SSF89155">
    <property type="entry name" value="TorD-like"/>
    <property type="match status" value="1"/>
</dbReference>
<accession>A8H7X2</accession>
<comment type="function">
    <text evidence="1">Involved in the biogenesis of TorA. Acts on TorA before the insertion of the molybdenum cofactor and, as a result, probably favors a conformation of the apoenzyme that is competent for acquiring the cofactor.</text>
</comment>
<comment type="subcellular location">
    <subcellularLocation>
        <location evidence="1">Cytoplasm</location>
    </subcellularLocation>
</comment>
<comment type="similarity">
    <text evidence="1">Belongs to the TorD/DmsD family. TorD subfamily.</text>
</comment>
<proteinExistence type="inferred from homology"/>
<protein>
    <recommendedName>
        <fullName evidence="1">Chaperone protein TorD</fullName>
    </recommendedName>
</protein>
<sequence length="221" mass="24813">MIKDAVNTETVEVNPVDQVRSTIYQLLSSLFAKEIDHKILHDLTSEQAQQFWAQLGSEAEFKADVDVLVAELAKLNTDKALLELAADYCGLFLVGTKYSASPYASLYLDDKPAKKGDEPLLFGEQHQQMTQFLKQSQLQVQSEFPEPADHLAVILAYVAHLCTHSDEAEQHSFIKANLANWLGNFVAKVTEVDTGNFYQALARLTYSWVKSDAEWLESELN</sequence>
<reference key="1">
    <citation type="submission" date="2007-10" db="EMBL/GenBank/DDBJ databases">
        <title>Complete sequence of Shewanella pealeana ATCC 700345.</title>
        <authorList>
            <consortium name="US DOE Joint Genome Institute"/>
            <person name="Copeland A."/>
            <person name="Lucas S."/>
            <person name="Lapidus A."/>
            <person name="Barry K."/>
            <person name="Glavina del Rio T."/>
            <person name="Dalin E."/>
            <person name="Tice H."/>
            <person name="Pitluck S."/>
            <person name="Chertkov O."/>
            <person name="Brettin T."/>
            <person name="Bruce D."/>
            <person name="Detter J.C."/>
            <person name="Han C."/>
            <person name="Schmutz J."/>
            <person name="Larimer F."/>
            <person name="Land M."/>
            <person name="Hauser L."/>
            <person name="Kyrpides N."/>
            <person name="Kim E."/>
            <person name="Zhao J.-S.Z."/>
            <person name="Manno D."/>
            <person name="Hawari J."/>
            <person name="Richardson P."/>
        </authorList>
    </citation>
    <scope>NUCLEOTIDE SEQUENCE [LARGE SCALE GENOMIC DNA]</scope>
    <source>
        <strain>ATCC 700345 / ANG-SQ1</strain>
    </source>
</reference>
<organism>
    <name type="scientific">Shewanella pealeana (strain ATCC 700345 / ANG-SQ1)</name>
    <dbReference type="NCBI Taxonomy" id="398579"/>
    <lineage>
        <taxon>Bacteria</taxon>
        <taxon>Pseudomonadati</taxon>
        <taxon>Pseudomonadota</taxon>
        <taxon>Gammaproteobacteria</taxon>
        <taxon>Alteromonadales</taxon>
        <taxon>Shewanellaceae</taxon>
        <taxon>Shewanella</taxon>
    </lineage>
</organism>
<name>TORD_SHEPA</name>
<keyword id="KW-0143">Chaperone</keyword>
<keyword id="KW-0963">Cytoplasm</keyword>
<keyword id="KW-1185">Reference proteome</keyword>
<gene>
    <name evidence="1" type="primary">torD</name>
    <name type="ordered locus">Spea_3344</name>
</gene>